<accession>C1CLC1</accession>
<sequence>MSVLVKEVIEKLRLDIVYGEPELLEKEINIADITRPGLEMTGYFDYYTPERIQLLGMKEWSYLISMPSNSRYEVLKKMFLPETPAVIVARGLVVPEEMLKAARECKIAILTSRAATSRLSGELSSYLDSRLAERTSVHGVLMDIYGMGVLIQGDSGIGKSETGLELVKRGHRLVADDRVDIFAKDEITLWGEPAEILKHLIEIRGVGIIDVMSLYGASAVKDSSQVQLAVYLENYDTHKTFDRLGNNAEELEVSGVAIPRIRIPVKTGRNISVVIEAAAMNYRAKEMGFDATRLFDERLTSLIARNEVQNA</sequence>
<gene>
    <name evidence="1" type="primary">hprK</name>
    <name type="ordered locus">SPP_1432</name>
</gene>
<reference key="1">
    <citation type="journal article" date="2010" name="Genome Biol.">
        <title>Structure and dynamics of the pan-genome of Streptococcus pneumoniae and closely related species.</title>
        <authorList>
            <person name="Donati C."/>
            <person name="Hiller N.L."/>
            <person name="Tettelin H."/>
            <person name="Muzzi A."/>
            <person name="Croucher N.J."/>
            <person name="Angiuoli S.V."/>
            <person name="Oggioni M."/>
            <person name="Dunning Hotopp J.C."/>
            <person name="Hu F.Z."/>
            <person name="Riley D.R."/>
            <person name="Covacci A."/>
            <person name="Mitchell T.J."/>
            <person name="Bentley S.D."/>
            <person name="Kilian M."/>
            <person name="Ehrlich G.D."/>
            <person name="Rappuoli R."/>
            <person name="Moxon E.R."/>
            <person name="Masignani V."/>
        </authorList>
    </citation>
    <scope>NUCLEOTIDE SEQUENCE [LARGE SCALE GENOMIC DNA]</scope>
    <source>
        <strain>P1031</strain>
    </source>
</reference>
<evidence type="ECO:0000255" key="1">
    <source>
        <dbReference type="HAMAP-Rule" id="MF_01249"/>
    </source>
</evidence>
<protein>
    <recommendedName>
        <fullName evidence="1">HPr kinase/phosphorylase</fullName>
        <shortName evidence="1">HPrK/P</shortName>
        <ecNumber evidence="1">2.7.11.-</ecNumber>
        <ecNumber evidence="1">2.7.4.-</ecNumber>
    </recommendedName>
    <alternativeName>
        <fullName evidence="1">HPr(Ser) kinase/phosphorylase</fullName>
    </alternativeName>
</protein>
<organism>
    <name type="scientific">Streptococcus pneumoniae (strain P1031)</name>
    <dbReference type="NCBI Taxonomy" id="488223"/>
    <lineage>
        <taxon>Bacteria</taxon>
        <taxon>Bacillati</taxon>
        <taxon>Bacillota</taxon>
        <taxon>Bacilli</taxon>
        <taxon>Lactobacillales</taxon>
        <taxon>Streptococcaceae</taxon>
        <taxon>Streptococcus</taxon>
    </lineage>
</organism>
<dbReference type="EC" id="2.7.11.-" evidence="1"/>
<dbReference type="EC" id="2.7.4.-" evidence="1"/>
<dbReference type="EMBL" id="CP000920">
    <property type="protein sequence ID" value="ACO20314.1"/>
    <property type="molecule type" value="Genomic_DNA"/>
</dbReference>
<dbReference type="RefSeq" id="WP_000115140.1">
    <property type="nucleotide sequence ID" value="NC_012467.1"/>
</dbReference>
<dbReference type="SMR" id="C1CLC1"/>
<dbReference type="GeneID" id="45653329"/>
<dbReference type="KEGG" id="spp:SPP_1432"/>
<dbReference type="HOGENOM" id="CLU_052030_0_1_9"/>
<dbReference type="GO" id="GO:0005524">
    <property type="term" value="F:ATP binding"/>
    <property type="evidence" value="ECO:0007669"/>
    <property type="project" value="UniProtKB-UniRule"/>
</dbReference>
<dbReference type="GO" id="GO:0000287">
    <property type="term" value="F:magnesium ion binding"/>
    <property type="evidence" value="ECO:0007669"/>
    <property type="project" value="UniProtKB-UniRule"/>
</dbReference>
<dbReference type="GO" id="GO:0000155">
    <property type="term" value="F:phosphorelay sensor kinase activity"/>
    <property type="evidence" value="ECO:0007669"/>
    <property type="project" value="InterPro"/>
</dbReference>
<dbReference type="GO" id="GO:0004674">
    <property type="term" value="F:protein serine/threonine kinase activity"/>
    <property type="evidence" value="ECO:0007669"/>
    <property type="project" value="UniProtKB-KW"/>
</dbReference>
<dbReference type="GO" id="GO:0004712">
    <property type="term" value="F:protein serine/threonine/tyrosine kinase activity"/>
    <property type="evidence" value="ECO:0007669"/>
    <property type="project" value="UniProtKB-UniRule"/>
</dbReference>
<dbReference type="GO" id="GO:0006109">
    <property type="term" value="P:regulation of carbohydrate metabolic process"/>
    <property type="evidence" value="ECO:0007669"/>
    <property type="project" value="UniProtKB-UniRule"/>
</dbReference>
<dbReference type="CDD" id="cd01918">
    <property type="entry name" value="HprK_C"/>
    <property type="match status" value="1"/>
</dbReference>
<dbReference type="FunFam" id="3.40.50.300:FF:000174">
    <property type="entry name" value="HPr kinase/phosphorylase"/>
    <property type="match status" value="1"/>
</dbReference>
<dbReference type="Gene3D" id="3.40.1390.20">
    <property type="entry name" value="HprK N-terminal domain-like"/>
    <property type="match status" value="1"/>
</dbReference>
<dbReference type="Gene3D" id="3.40.50.300">
    <property type="entry name" value="P-loop containing nucleotide triphosphate hydrolases"/>
    <property type="match status" value="1"/>
</dbReference>
<dbReference type="HAMAP" id="MF_01249">
    <property type="entry name" value="HPr_kinase"/>
    <property type="match status" value="1"/>
</dbReference>
<dbReference type="InterPro" id="IPR003755">
    <property type="entry name" value="HPr(Ser)_kin/Pase"/>
</dbReference>
<dbReference type="InterPro" id="IPR011104">
    <property type="entry name" value="Hpr_kin/Pase_C"/>
</dbReference>
<dbReference type="InterPro" id="IPR011126">
    <property type="entry name" value="Hpr_kin/Pase_Hpr_N"/>
</dbReference>
<dbReference type="InterPro" id="IPR027417">
    <property type="entry name" value="P-loop_NTPase"/>
</dbReference>
<dbReference type="InterPro" id="IPR028979">
    <property type="entry name" value="Ser_kin/Pase_Hpr-like_N_sf"/>
</dbReference>
<dbReference type="NCBIfam" id="TIGR00679">
    <property type="entry name" value="hpr-ser"/>
    <property type="match status" value="1"/>
</dbReference>
<dbReference type="PANTHER" id="PTHR30305:SF1">
    <property type="entry name" value="HPR KINASE_PHOSPHORYLASE"/>
    <property type="match status" value="1"/>
</dbReference>
<dbReference type="PANTHER" id="PTHR30305">
    <property type="entry name" value="PROTEIN YJDM-RELATED"/>
    <property type="match status" value="1"/>
</dbReference>
<dbReference type="Pfam" id="PF07475">
    <property type="entry name" value="Hpr_kinase_C"/>
    <property type="match status" value="1"/>
</dbReference>
<dbReference type="Pfam" id="PF02603">
    <property type="entry name" value="Hpr_kinase_N"/>
    <property type="match status" value="1"/>
</dbReference>
<dbReference type="SUPFAM" id="SSF75138">
    <property type="entry name" value="HprK N-terminal domain-like"/>
    <property type="match status" value="1"/>
</dbReference>
<dbReference type="SUPFAM" id="SSF53795">
    <property type="entry name" value="PEP carboxykinase-like"/>
    <property type="match status" value="1"/>
</dbReference>
<comment type="function">
    <text evidence="1">Catalyzes the ATP- as well as the pyrophosphate-dependent phosphorylation of a specific serine residue in HPr, a phosphocarrier protein of the phosphoenolpyruvate-dependent sugar phosphotransferase system (PTS). HprK/P also catalyzes the pyrophosphate-producing, inorganic phosphate-dependent dephosphorylation (phosphorolysis) of seryl-phosphorylated HPr (P-Ser-HPr). The two antagonistic activities of HprK/P are regulated by several intracellular metabolites, which change their concentration in response to the absence or presence of rapidly metabolisable carbon sources (glucose, fructose, etc.) in the growth medium. Therefore, by controlling the phosphorylation state of HPr, HPrK/P is a sensor enzyme that plays a major role in the regulation of carbon metabolism and sugar transport: it mediates carbon catabolite repression (CCR), and regulates PTS-catalyzed carbohydrate uptake and inducer exclusion.</text>
</comment>
<comment type="catalytic activity">
    <reaction evidence="1">
        <text>[HPr protein]-L-serine + ATP = [HPr protein]-O-phospho-L-serine + ADP + H(+)</text>
        <dbReference type="Rhea" id="RHEA:46600"/>
        <dbReference type="Rhea" id="RHEA-COMP:11602"/>
        <dbReference type="Rhea" id="RHEA-COMP:11603"/>
        <dbReference type="ChEBI" id="CHEBI:15378"/>
        <dbReference type="ChEBI" id="CHEBI:29999"/>
        <dbReference type="ChEBI" id="CHEBI:30616"/>
        <dbReference type="ChEBI" id="CHEBI:83421"/>
        <dbReference type="ChEBI" id="CHEBI:456216"/>
    </reaction>
</comment>
<comment type="catalytic activity">
    <reaction evidence="1">
        <text>[HPr protein]-O-phospho-L-serine + phosphate + H(+) = [HPr protein]-L-serine + diphosphate</text>
        <dbReference type="Rhea" id="RHEA:46604"/>
        <dbReference type="Rhea" id="RHEA-COMP:11602"/>
        <dbReference type="Rhea" id="RHEA-COMP:11603"/>
        <dbReference type="ChEBI" id="CHEBI:15378"/>
        <dbReference type="ChEBI" id="CHEBI:29999"/>
        <dbReference type="ChEBI" id="CHEBI:33019"/>
        <dbReference type="ChEBI" id="CHEBI:43474"/>
        <dbReference type="ChEBI" id="CHEBI:83421"/>
    </reaction>
</comment>
<comment type="cofactor">
    <cofactor evidence="1">
        <name>Mg(2+)</name>
        <dbReference type="ChEBI" id="CHEBI:18420"/>
    </cofactor>
</comment>
<comment type="subunit">
    <text evidence="1">Homohexamer.</text>
</comment>
<comment type="domain">
    <text evidence="1">The Walker A ATP-binding motif also binds Pi and PPi.</text>
</comment>
<comment type="miscellaneous">
    <text evidence="1">Both phosphorylation and phosphorolysis are carried out by the same active site and suggest a common mechanism for both reactions.</text>
</comment>
<comment type="similarity">
    <text evidence="1">Belongs to the HPrK/P family.</text>
</comment>
<proteinExistence type="inferred from homology"/>
<feature type="chain" id="PRO_1000165080" description="HPr kinase/phosphorylase">
    <location>
        <begin position="1"/>
        <end position="311"/>
    </location>
</feature>
<feature type="region of interest" description="Important for the catalytic mechanism of both phosphorylation and dephosphorylation" evidence="1">
    <location>
        <begin position="201"/>
        <end position="210"/>
    </location>
</feature>
<feature type="region of interest" description="Important for the catalytic mechanism of dephosphorylation" evidence="1">
    <location>
        <begin position="264"/>
        <end position="269"/>
    </location>
</feature>
<feature type="active site" evidence="1">
    <location>
        <position position="138"/>
    </location>
</feature>
<feature type="active site" evidence="1">
    <location>
        <position position="159"/>
    </location>
</feature>
<feature type="active site" description="Proton acceptor; for phosphorylation activity. Proton donor; for dephosphorylation activity" evidence="1">
    <location>
        <position position="177"/>
    </location>
</feature>
<feature type="active site" evidence="1">
    <location>
        <position position="243"/>
    </location>
</feature>
<feature type="binding site" evidence="1">
    <location>
        <begin position="153"/>
        <end position="160"/>
    </location>
    <ligand>
        <name>ATP</name>
        <dbReference type="ChEBI" id="CHEBI:30616"/>
    </ligand>
</feature>
<feature type="binding site" evidence="1">
    <location>
        <position position="160"/>
    </location>
    <ligand>
        <name>Mg(2+)</name>
        <dbReference type="ChEBI" id="CHEBI:18420"/>
    </ligand>
</feature>
<feature type="binding site" evidence="1">
    <location>
        <position position="202"/>
    </location>
    <ligand>
        <name>Mg(2+)</name>
        <dbReference type="ChEBI" id="CHEBI:18420"/>
    </ligand>
</feature>
<name>HPRK_STRZP</name>
<keyword id="KW-0067">ATP-binding</keyword>
<keyword id="KW-0119">Carbohydrate metabolism</keyword>
<keyword id="KW-0418">Kinase</keyword>
<keyword id="KW-0460">Magnesium</keyword>
<keyword id="KW-0479">Metal-binding</keyword>
<keyword id="KW-0511">Multifunctional enzyme</keyword>
<keyword id="KW-0547">Nucleotide-binding</keyword>
<keyword id="KW-0723">Serine/threonine-protein kinase</keyword>
<keyword id="KW-0808">Transferase</keyword>